<accession>Q9LTH3</accession>
<proteinExistence type="evidence at transcript level"/>
<gene>
    <name type="primary">UGT76E1</name>
    <name type="ordered locus">At5g59580</name>
    <name type="ORF">F2O15.16</name>
</gene>
<sequence length="453" mass="50804">MEELGVKRRIVLVPVPAQGHVTPIMQLGKALYSKGFSITVVLTQYNRVSSSKDFSDFHFLTIPGSLTESDLKNLGPFKFLFKLNQICEASFKQCIGQLLQEQGNDIACVVYDEYMYFSQAAVKEFQLPSVLFSTTSATAFVCRSVLSRVNAESFLLDMKDPKVSDKEFPGLHPLRYKDLPTSAFGPLESILKVYSETVNIRTASAVIINSTSCLESSSLAWLQKQLQVPVYPIGPLHIAASAPSSLLEEDRSCLEWLNKQKIGSVIYISLGSLALMETKDMLEMAWGLRNSNQPFLWVIRPGSIPGSEWTESLPEEFSRLVSERGYIVKWAPQIEVLRHPAVGGFWSHCGWNSTLESIGEGVPMICRPFTGDQKVNARYLERVWRIGVQLEGELDKGTVERAVERLIMDEEGAEMRKRVINLKEKLQASVKSRGSSFSSLDNFVNSLKMMNFM</sequence>
<reference key="1">
    <citation type="submission" date="1999-04" db="EMBL/GenBank/DDBJ databases">
        <title>Structural analysis of Arabidopsis thaliana chromosome 5. XI.</title>
        <authorList>
            <person name="Kaneko T."/>
            <person name="Katoh T."/>
            <person name="Asamizu E."/>
            <person name="Sato S."/>
            <person name="Nakamura Y."/>
            <person name="Kotani H."/>
            <person name="Tabata S."/>
        </authorList>
    </citation>
    <scope>NUCLEOTIDE SEQUENCE [LARGE SCALE GENOMIC DNA]</scope>
    <source>
        <strain>cv. Columbia</strain>
    </source>
</reference>
<reference key="2">
    <citation type="journal article" date="2017" name="Plant J.">
        <title>Araport11: a complete reannotation of the Arabidopsis thaliana reference genome.</title>
        <authorList>
            <person name="Cheng C.Y."/>
            <person name="Krishnakumar V."/>
            <person name="Chan A.P."/>
            <person name="Thibaud-Nissen F."/>
            <person name="Schobel S."/>
            <person name="Town C.D."/>
        </authorList>
    </citation>
    <scope>GENOME REANNOTATION</scope>
    <source>
        <strain>cv. Columbia</strain>
    </source>
</reference>
<reference key="3">
    <citation type="journal article" date="2001" name="J. Biol. Chem.">
        <title>Phylogenetic analysis of the UDP-glycosyltransferase multigene family of Arabidopsis thaliana.</title>
        <authorList>
            <person name="Li Y."/>
            <person name="Baldauf S."/>
            <person name="Lim E.K."/>
            <person name="Bowles D.J."/>
        </authorList>
    </citation>
    <scope>GENE FAMILY</scope>
</reference>
<reference key="4">
    <citation type="journal article" date="2004" name="Biotechnol. Bioeng.">
        <title>Arabidopsis glycosyltransferases as biocatalysts in fermentation for regioselective synthesis of diverse quercetin glucosides.</title>
        <authorList>
            <person name="Lim E.K."/>
            <person name="Ashford D.A."/>
            <person name="Hou B."/>
            <person name="Jackson R.G."/>
            <person name="Bowles D.J."/>
        </authorList>
    </citation>
    <scope>FUNCTION</scope>
</reference>
<keyword id="KW-0328">Glycosyltransferase</keyword>
<keyword id="KW-1185">Reference proteome</keyword>
<keyword id="KW-0808">Transferase</keyword>
<evidence type="ECO:0000250" key="1"/>
<evidence type="ECO:0000269" key="2">
    <source>
    </source>
</evidence>
<evidence type="ECO:0000305" key="3"/>
<organism>
    <name type="scientific">Arabidopsis thaliana</name>
    <name type="common">Mouse-ear cress</name>
    <dbReference type="NCBI Taxonomy" id="3702"/>
    <lineage>
        <taxon>Eukaryota</taxon>
        <taxon>Viridiplantae</taxon>
        <taxon>Streptophyta</taxon>
        <taxon>Embryophyta</taxon>
        <taxon>Tracheophyta</taxon>
        <taxon>Spermatophyta</taxon>
        <taxon>Magnoliopsida</taxon>
        <taxon>eudicotyledons</taxon>
        <taxon>Gunneridae</taxon>
        <taxon>Pentapetalae</taxon>
        <taxon>rosids</taxon>
        <taxon>malvids</taxon>
        <taxon>Brassicales</taxon>
        <taxon>Brassicaceae</taxon>
        <taxon>Camelineae</taxon>
        <taxon>Arabidopsis</taxon>
    </lineage>
</organism>
<feature type="chain" id="PRO_0000409086" description="UDP-glycosyltransferase 76E1">
    <location>
        <begin position="1"/>
        <end position="453"/>
    </location>
</feature>
<feature type="binding site" evidence="1">
    <location>
        <position position="272"/>
    </location>
    <ligand>
        <name>UDP-alpha-D-glucose</name>
        <dbReference type="ChEBI" id="CHEBI:58885"/>
    </ligand>
</feature>
<feature type="binding site" evidence="1">
    <location>
        <begin position="331"/>
        <end position="333"/>
    </location>
    <ligand>
        <name>UDP-alpha-D-glucose</name>
        <dbReference type="ChEBI" id="CHEBI:58885"/>
    </ligand>
</feature>
<feature type="binding site" evidence="1">
    <location>
        <begin position="348"/>
        <end position="356"/>
    </location>
    <ligand>
        <name>UDP-alpha-D-glucose</name>
        <dbReference type="ChEBI" id="CHEBI:58885"/>
    </ligand>
</feature>
<feature type="binding site" evidence="1">
    <location>
        <begin position="370"/>
        <end position="373"/>
    </location>
    <ligand>
        <name>UDP-alpha-D-glucose</name>
        <dbReference type="ChEBI" id="CHEBI:58885"/>
    </ligand>
</feature>
<protein>
    <recommendedName>
        <fullName>UDP-glycosyltransferase 76E1</fullName>
        <ecNumber>2.4.1.-</ecNumber>
    </recommendedName>
</protein>
<comment type="function">
    <text evidence="2">Possesses low quercetin 3-O-glucosyltransferase and 7-O-glucosyltransferase activities in vitro.</text>
</comment>
<comment type="similarity">
    <text evidence="3">Belongs to the UDP-glycosyltransferase family.</text>
</comment>
<dbReference type="EC" id="2.4.1.-"/>
<dbReference type="EMBL" id="AB025604">
    <property type="protein sequence ID" value="BAA97492.1"/>
    <property type="molecule type" value="Genomic_DNA"/>
</dbReference>
<dbReference type="EMBL" id="CP002688">
    <property type="protein sequence ID" value="AED97208.1"/>
    <property type="molecule type" value="Genomic_DNA"/>
</dbReference>
<dbReference type="RefSeq" id="NP_200766.2">
    <property type="nucleotide sequence ID" value="NM_125350.3"/>
</dbReference>
<dbReference type="SMR" id="Q9LTH3"/>
<dbReference type="FunCoup" id="Q9LTH3">
    <property type="interactions" value="218"/>
</dbReference>
<dbReference type="STRING" id="3702.Q9LTH3"/>
<dbReference type="CAZy" id="GT1">
    <property type="family name" value="Glycosyltransferase Family 1"/>
</dbReference>
<dbReference type="iPTMnet" id="Q9LTH3"/>
<dbReference type="PaxDb" id="3702-AT5G59580.1"/>
<dbReference type="ProteomicsDB" id="228680"/>
<dbReference type="EnsemblPlants" id="AT5G59580.1">
    <property type="protein sequence ID" value="AT5G59580.1"/>
    <property type="gene ID" value="AT5G59580"/>
</dbReference>
<dbReference type="GeneID" id="836077"/>
<dbReference type="Gramene" id="AT5G59580.1">
    <property type="protein sequence ID" value="AT5G59580.1"/>
    <property type="gene ID" value="AT5G59580"/>
</dbReference>
<dbReference type="KEGG" id="ath:AT5G59580"/>
<dbReference type="Araport" id="AT5G59580"/>
<dbReference type="TAIR" id="AT5G59580">
    <property type="gene designation" value="UGT76E1"/>
</dbReference>
<dbReference type="eggNOG" id="KOG1192">
    <property type="taxonomic scope" value="Eukaryota"/>
</dbReference>
<dbReference type="HOGENOM" id="CLU_001724_0_0_1"/>
<dbReference type="InParanoid" id="Q9LTH3"/>
<dbReference type="OMA" id="CIVYDEC"/>
<dbReference type="PhylomeDB" id="Q9LTH3"/>
<dbReference type="PRO" id="PR:Q9LTH3"/>
<dbReference type="Proteomes" id="UP000006548">
    <property type="component" value="Chromosome 5"/>
</dbReference>
<dbReference type="ExpressionAtlas" id="Q9LTH3">
    <property type="expression patterns" value="baseline and differential"/>
</dbReference>
<dbReference type="GO" id="GO:0080043">
    <property type="term" value="F:quercetin 3-O-glucosyltransferase activity"/>
    <property type="evidence" value="ECO:0000314"/>
    <property type="project" value="TAIR"/>
</dbReference>
<dbReference type="GO" id="GO:0080044">
    <property type="term" value="F:quercetin 7-O-glucosyltransferase activity"/>
    <property type="evidence" value="ECO:0000314"/>
    <property type="project" value="TAIR"/>
</dbReference>
<dbReference type="CDD" id="cd03784">
    <property type="entry name" value="GT1_Gtf-like"/>
    <property type="match status" value="1"/>
</dbReference>
<dbReference type="FunFam" id="3.40.50.2000:FF:000040">
    <property type="entry name" value="UDP-glycosyltransferase 76C1"/>
    <property type="match status" value="1"/>
</dbReference>
<dbReference type="FunFam" id="3.40.50.2000:FF:000151">
    <property type="entry name" value="UDP-glycosyltransferase 76E9"/>
    <property type="match status" value="1"/>
</dbReference>
<dbReference type="Gene3D" id="3.40.50.2000">
    <property type="entry name" value="Glycogen Phosphorylase B"/>
    <property type="match status" value="2"/>
</dbReference>
<dbReference type="InterPro" id="IPR002213">
    <property type="entry name" value="UDP_glucos_trans"/>
</dbReference>
<dbReference type="PANTHER" id="PTHR11926">
    <property type="entry name" value="GLUCOSYL/GLUCURONOSYL TRANSFERASES"/>
    <property type="match status" value="1"/>
</dbReference>
<dbReference type="PANTHER" id="PTHR11926:SF1034">
    <property type="entry name" value="UDP-GLYCOSYLTRANSFERASE 76E1-RELATED"/>
    <property type="match status" value="1"/>
</dbReference>
<dbReference type="Pfam" id="PF00201">
    <property type="entry name" value="UDPGT"/>
    <property type="match status" value="1"/>
</dbReference>
<dbReference type="SUPFAM" id="SSF53756">
    <property type="entry name" value="UDP-Glycosyltransferase/glycogen phosphorylase"/>
    <property type="match status" value="1"/>
</dbReference>
<name>U76E1_ARATH</name>